<name>MURB_NITHX</name>
<organism>
    <name type="scientific">Nitrobacter hamburgensis (strain DSM 10229 / NCIMB 13809 / X14)</name>
    <dbReference type="NCBI Taxonomy" id="323097"/>
    <lineage>
        <taxon>Bacteria</taxon>
        <taxon>Pseudomonadati</taxon>
        <taxon>Pseudomonadota</taxon>
        <taxon>Alphaproteobacteria</taxon>
        <taxon>Hyphomicrobiales</taxon>
        <taxon>Nitrobacteraceae</taxon>
        <taxon>Nitrobacter</taxon>
    </lineage>
</organism>
<protein>
    <recommendedName>
        <fullName evidence="1">UDP-N-acetylenolpyruvoylglucosamine reductase</fullName>
        <ecNumber evidence="1">1.3.1.98</ecNumber>
    </recommendedName>
    <alternativeName>
        <fullName evidence="1">UDP-N-acetylmuramate dehydrogenase</fullName>
    </alternativeName>
</protein>
<sequence>MFADITTKLKSQMPELRGRMLANEPLAPLTWFRVGGPAQVLFTPADENDLAYFLRHLPEEIPIYCIGVGSNLIVRDRGLPGVVIRLAPRGFGEVTTDGDTVHAGAAALDKRVAEAAAAADIGGLEFYFGIPGTIGGALRMNAGANGSETKDVLVEARAVSRRGDKITVDNAGMKFEYRNSAIYPSVIFTGGTFRGRRAEPEAIRARMNEVQSHRETVQPIREKTGGSTFKNPPGQSAWKLIDAAGMRGHRVGGAQVSEMHCNFLINTGEATARDIETLGETVRARVKEHAGVDLQWEIKRIGLEA</sequence>
<reference key="1">
    <citation type="submission" date="2006-03" db="EMBL/GenBank/DDBJ databases">
        <title>Complete sequence of chromosome of Nitrobacter hamburgensis X14.</title>
        <authorList>
            <consortium name="US DOE Joint Genome Institute"/>
            <person name="Copeland A."/>
            <person name="Lucas S."/>
            <person name="Lapidus A."/>
            <person name="Barry K."/>
            <person name="Detter J.C."/>
            <person name="Glavina del Rio T."/>
            <person name="Hammon N."/>
            <person name="Israni S."/>
            <person name="Dalin E."/>
            <person name="Tice H."/>
            <person name="Pitluck S."/>
            <person name="Chain P."/>
            <person name="Malfatti S."/>
            <person name="Shin M."/>
            <person name="Vergez L."/>
            <person name="Schmutz J."/>
            <person name="Larimer F."/>
            <person name="Land M."/>
            <person name="Hauser L."/>
            <person name="Kyrpides N."/>
            <person name="Ivanova N."/>
            <person name="Ward B."/>
            <person name="Arp D."/>
            <person name="Klotz M."/>
            <person name="Stein L."/>
            <person name="O'Mullan G."/>
            <person name="Starkenburg S."/>
            <person name="Sayavedra L."/>
            <person name="Poret-Peterson A.T."/>
            <person name="Gentry M.E."/>
            <person name="Bruce D."/>
            <person name="Richardson P."/>
        </authorList>
    </citation>
    <scope>NUCLEOTIDE SEQUENCE [LARGE SCALE GENOMIC DNA]</scope>
    <source>
        <strain>DSM 10229 / NCIMB 13809 / X14</strain>
    </source>
</reference>
<evidence type="ECO:0000255" key="1">
    <source>
        <dbReference type="HAMAP-Rule" id="MF_00037"/>
    </source>
</evidence>
<gene>
    <name evidence="1" type="primary">murB</name>
    <name type="ordered locus">Nham_1282</name>
</gene>
<accession>Q1QNU0</accession>
<feature type="chain" id="PRO_0000332480" description="UDP-N-acetylenolpyruvoylglucosamine reductase">
    <location>
        <begin position="1"/>
        <end position="305"/>
    </location>
</feature>
<feature type="domain" description="FAD-binding PCMH-type" evidence="1">
    <location>
        <begin position="33"/>
        <end position="198"/>
    </location>
</feature>
<feature type="active site" evidence="1">
    <location>
        <position position="178"/>
    </location>
</feature>
<feature type="active site" description="Proton donor" evidence="1">
    <location>
        <position position="227"/>
    </location>
</feature>
<feature type="active site" evidence="1">
    <location>
        <position position="297"/>
    </location>
</feature>
<keyword id="KW-0131">Cell cycle</keyword>
<keyword id="KW-0132">Cell division</keyword>
<keyword id="KW-0133">Cell shape</keyword>
<keyword id="KW-0961">Cell wall biogenesis/degradation</keyword>
<keyword id="KW-0963">Cytoplasm</keyword>
<keyword id="KW-0274">FAD</keyword>
<keyword id="KW-0285">Flavoprotein</keyword>
<keyword id="KW-0521">NADP</keyword>
<keyword id="KW-0560">Oxidoreductase</keyword>
<keyword id="KW-0573">Peptidoglycan synthesis</keyword>
<keyword id="KW-1185">Reference proteome</keyword>
<comment type="function">
    <text evidence="1">Cell wall formation.</text>
</comment>
<comment type="catalytic activity">
    <reaction evidence="1">
        <text>UDP-N-acetyl-alpha-D-muramate + NADP(+) = UDP-N-acetyl-3-O-(1-carboxyvinyl)-alpha-D-glucosamine + NADPH + H(+)</text>
        <dbReference type="Rhea" id="RHEA:12248"/>
        <dbReference type="ChEBI" id="CHEBI:15378"/>
        <dbReference type="ChEBI" id="CHEBI:57783"/>
        <dbReference type="ChEBI" id="CHEBI:58349"/>
        <dbReference type="ChEBI" id="CHEBI:68483"/>
        <dbReference type="ChEBI" id="CHEBI:70757"/>
        <dbReference type="EC" id="1.3.1.98"/>
    </reaction>
</comment>
<comment type="cofactor">
    <cofactor evidence="1">
        <name>FAD</name>
        <dbReference type="ChEBI" id="CHEBI:57692"/>
    </cofactor>
</comment>
<comment type="pathway">
    <text evidence="1">Cell wall biogenesis; peptidoglycan biosynthesis.</text>
</comment>
<comment type="subcellular location">
    <subcellularLocation>
        <location evidence="1">Cytoplasm</location>
    </subcellularLocation>
</comment>
<comment type="similarity">
    <text evidence="1">Belongs to the MurB family.</text>
</comment>
<proteinExistence type="inferred from homology"/>
<dbReference type="EC" id="1.3.1.98" evidence="1"/>
<dbReference type="EMBL" id="CP000319">
    <property type="protein sequence ID" value="ABE62107.1"/>
    <property type="molecule type" value="Genomic_DNA"/>
</dbReference>
<dbReference type="RefSeq" id="WP_011509799.1">
    <property type="nucleotide sequence ID" value="NC_007964.1"/>
</dbReference>
<dbReference type="SMR" id="Q1QNU0"/>
<dbReference type="STRING" id="323097.Nham_1282"/>
<dbReference type="KEGG" id="nha:Nham_1282"/>
<dbReference type="eggNOG" id="COG0812">
    <property type="taxonomic scope" value="Bacteria"/>
</dbReference>
<dbReference type="HOGENOM" id="CLU_035304_1_0_5"/>
<dbReference type="OrthoDB" id="9804753at2"/>
<dbReference type="UniPathway" id="UPA00219"/>
<dbReference type="Proteomes" id="UP000001953">
    <property type="component" value="Chromosome"/>
</dbReference>
<dbReference type="GO" id="GO:0005829">
    <property type="term" value="C:cytosol"/>
    <property type="evidence" value="ECO:0007669"/>
    <property type="project" value="TreeGrafter"/>
</dbReference>
<dbReference type="GO" id="GO:0071949">
    <property type="term" value="F:FAD binding"/>
    <property type="evidence" value="ECO:0007669"/>
    <property type="project" value="InterPro"/>
</dbReference>
<dbReference type="GO" id="GO:0008762">
    <property type="term" value="F:UDP-N-acetylmuramate dehydrogenase activity"/>
    <property type="evidence" value="ECO:0007669"/>
    <property type="project" value="UniProtKB-UniRule"/>
</dbReference>
<dbReference type="GO" id="GO:0051301">
    <property type="term" value="P:cell division"/>
    <property type="evidence" value="ECO:0007669"/>
    <property type="project" value="UniProtKB-KW"/>
</dbReference>
<dbReference type="GO" id="GO:0071555">
    <property type="term" value="P:cell wall organization"/>
    <property type="evidence" value="ECO:0007669"/>
    <property type="project" value="UniProtKB-KW"/>
</dbReference>
<dbReference type="GO" id="GO:0009252">
    <property type="term" value="P:peptidoglycan biosynthetic process"/>
    <property type="evidence" value="ECO:0007669"/>
    <property type="project" value="UniProtKB-UniRule"/>
</dbReference>
<dbReference type="GO" id="GO:0008360">
    <property type="term" value="P:regulation of cell shape"/>
    <property type="evidence" value="ECO:0007669"/>
    <property type="project" value="UniProtKB-KW"/>
</dbReference>
<dbReference type="Gene3D" id="3.30.465.10">
    <property type="match status" value="1"/>
</dbReference>
<dbReference type="Gene3D" id="3.90.78.10">
    <property type="entry name" value="UDP-N-acetylenolpyruvoylglucosamine reductase, C-terminal domain"/>
    <property type="match status" value="1"/>
</dbReference>
<dbReference type="Gene3D" id="3.30.43.10">
    <property type="entry name" value="Uridine Diphospho-n-acetylenolpyruvylglucosamine Reductase, domain 2"/>
    <property type="match status" value="1"/>
</dbReference>
<dbReference type="HAMAP" id="MF_00037">
    <property type="entry name" value="MurB"/>
    <property type="match status" value="1"/>
</dbReference>
<dbReference type="InterPro" id="IPR016166">
    <property type="entry name" value="FAD-bd_PCMH"/>
</dbReference>
<dbReference type="InterPro" id="IPR036318">
    <property type="entry name" value="FAD-bd_PCMH-like_sf"/>
</dbReference>
<dbReference type="InterPro" id="IPR016167">
    <property type="entry name" value="FAD-bd_PCMH_sub1"/>
</dbReference>
<dbReference type="InterPro" id="IPR016169">
    <property type="entry name" value="FAD-bd_PCMH_sub2"/>
</dbReference>
<dbReference type="InterPro" id="IPR003170">
    <property type="entry name" value="MurB"/>
</dbReference>
<dbReference type="InterPro" id="IPR011601">
    <property type="entry name" value="MurB_C"/>
</dbReference>
<dbReference type="InterPro" id="IPR036635">
    <property type="entry name" value="MurB_C_sf"/>
</dbReference>
<dbReference type="InterPro" id="IPR006094">
    <property type="entry name" value="Oxid_FAD_bind_N"/>
</dbReference>
<dbReference type="NCBIfam" id="TIGR00179">
    <property type="entry name" value="murB"/>
    <property type="match status" value="1"/>
</dbReference>
<dbReference type="NCBIfam" id="NF010480">
    <property type="entry name" value="PRK13905.1"/>
    <property type="match status" value="1"/>
</dbReference>
<dbReference type="PANTHER" id="PTHR21071">
    <property type="entry name" value="UDP-N-ACETYLENOLPYRUVOYLGLUCOSAMINE REDUCTASE"/>
    <property type="match status" value="1"/>
</dbReference>
<dbReference type="PANTHER" id="PTHR21071:SF4">
    <property type="entry name" value="UDP-N-ACETYLENOLPYRUVOYLGLUCOSAMINE REDUCTASE"/>
    <property type="match status" value="1"/>
</dbReference>
<dbReference type="Pfam" id="PF01565">
    <property type="entry name" value="FAD_binding_4"/>
    <property type="match status" value="1"/>
</dbReference>
<dbReference type="Pfam" id="PF02873">
    <property type="entry name" value="MurB_C"/>
    <property type="match status" value="1"/>
</dbReference>
<dbReference type="SUPFAM" id="SSF56176">
    <property type="entry name" value="FAD-binding/transporter-associated domain-like"/>
    <property type="match status" value="1"/>
</dbReference>
<dbReference type="SUPFAM" id="SSF56194">
    <property type="entry name" value="Uridine diphospho-N-Acetylenolpyruvylglucosamine reductase, MurB, C-terminal domain"/>
    <property type="match status" value="1"/>
</dbReference>
<dbReference type="PROSITE" id="PS51387">
    <property type="entry name" value="FAD_PCMH"/>
    <property type="match status" value="1"/>
</dbReference>